<feature type="chain" id="PRO_0000461702" description="tRNA-acetylating toxin 1">
    <location>
        <begin position="1"/>
        <end position="161"/>
    </location>
</feature>
<feature type="active site" evidence="11">
    <location>
        <position position="140"/>
    </location>
</feature>
<feature type="binding site" evidence="13 14">
    <location>
        <position position="92"/>
    </location>
    <ligand>
        <name>acetyl-CoA</name>
        <dbReference type="ChEBI" id="CHEBI:57288"/>
    </ligand>
</feature>
<feature type="binding site" evidence="13 14">
    <location>
        <position position="94"/>
    </location>
    <ligand>
        <name>acetyl-CoA</name>
        <dbReference type="ChEBI" id="CHEBI:57288"/>
    </ligand>
</feature>
<feature type="binding site" evidence="14">
    <location>
        <position position="99"/>
    </location>
    <ligand>
        <name>acetyl-CoA</name>
        <dbReference type="ChEBI" id="CHEBI:57288"/>
    </ligand>
</feature>
<feature type="binding site" evidence="13">
    <location>
        <position position="100"/>
    </location>
    <ligand>
        <name>acetyl-CoA</name>
        <dbReference type="ChEBI" id="CHEBI:57288"/>
    </ligand>
</feature>
<feature type="binding site" evidence="13">
    <location>
        <position position="102"/>
    </location>
    <ligand>
        <name>acetyl-CoA</name>
        <dbReference type="ChEBI" id="CHEBI:57288"/>
    </ligand>
</feature>
<feature type="binding site" evidence="13 14">
    <location>
        <position position="104"/>
    </location>
    <ligand>
        <name>acetyl-CoA</name>
        <dbReference type="ChEBI" id="CHEBI:57288"/>
    </ligand>
</feature>
<feature type="binding site" evidence="13 14">
    <location>
        <position position="105"/>
    </location>
    <ligand>
        <name>acetyl-CoA</name>
        <dbReference type="ChEBI" id="CHEBI:57288"/>
    </ligand>
</feature>
<feature type="binding site" evidence="13">
    <location>
        <position position="132"/>
    </location>
    <ligand>
        <name>acetyl-CoA</name>
        <dbReference type="ChEBI" id="CHEBI:57288"/>
    </ligand>
</feature>
<feature type="binding site" evidence="13 14">
    <location>
        <position position="135"/>
    </location>
    <ligand>
        <name>acetyl-CoA</name>
        <dbReference type="ChEBI" id="CHEBI:57288"/>
    </ligand>
</feature>
<feature type="binding site" evidence="13 14">
    <location>
        <position position="142"/>
    </location>
    <ligand>
        <name>acetyl-CoA</name>
        <dbReference type="ChEBI" id="CHEBI:57288"/>
    </ligand>
</feature>
<feature type="mutagenesis site" description="Loss of toxicity in vivo." evidence="4">
    <original>K</original>
    <variation>E</variation>
    <location>
        <position position="31"/>
    </location>
</feature>
<feature type="mutagenesis site" description="Toxic in vivo. Loss of toxicity in vivo; when associated with E-91." evidence="3">
    <original>K</original>
    <variation>E</variation>
    <location>
        <position position="33"/>
    </location>
</feature>
<feature type="mutagenesis site" description="Decreased toxicity in vivo." evidence="3">
    <original>K</original>
    <variation>E</variation>
    <location>
        <position position="36"/>
    </location>
</feature>
<feature type="mutagenesis site" description="Loss of toxicity in vivo." evidence="3">
    <original>R</original>
    <variation>E</variation>
    <location>
        <position position="77"/>
    </location>
</feature>
<feature type="mutagenesis site" description="Loss of toxicity in vivo." evidence="3">
    <original>R</original>
    <variation>E</variation>
    <location>
        <position position="78"/>
    </location>
</feature>
<feature type="mutagenesis site" description="Decreased toxicity in vivo. Loss of toxicity in vivo; when associated with E-33." evidence="3">
    <original>R</original>
    <variation>E</variation>
    <location>
        <position position="91"/>
    </location>
</feature>
<feature type="mutagenesis site" description="Loss of toxicity in vivo." evidence="3">
    <original>A</original>
    <variation>P</variation>
    <location>
        <position position="93"/>
    </location>
</feature>
<feature type="mutagenesis site" description="Loss of toxicity in vivo." evidence="3">
    <original>Y</original>
    <variation>F</variation>
    <location>
        <position position="140"/>
    </location>
</feature>
<feature type="mutagenesis site" description="Loss of toxicity in vivo." evidence="3">
    <original>K</original>
    <variation>E</variation>
    <location>
        <position position="146"/>
    </location>
</feature>
<feature type="mutagenesis site" description="Slight loss of toxicity in vivo." evidence="3">
    <original>R</original>
    <variation>E</variation>
    <location>
        <position position="158"/>
    </location>
</feature>
<feature type="helix" evidence="15">
    <location>
        <begin position="24"/>
        <end position="39"/>
    </location>
</feature>
<feature type="strand" evidence="15">
    <location>
        <begin position="44"/>
        <end position="50"/>
    </location>
</feature>
<feature type="strand" evidence="15">
    <location>
        <begin position="55"/>
        <end position="67"/>
    </location>
</feature>
<feature type="helix" evidence="15">
    <location>
        <begin position="69"/>
        <end position="71"/>
    </location>
</feature>
<feature type="helix" evidence="15">
    <location>
        <begin position="74"/>
        <end position="77"/>
    </location>
</feature>
<feature type="strand" evidence="15">
    <location>
        <begin position="82"/>
        <end position="94"/>
    </location>
</feature>
<feature type="helix" evidence="15">
    <location>
        <begin position="96"/>
        <end position="98"/>
    </location>
</feature>
<feature type="turn" evidence="16">
    <location>
        <begin position="99"/>
        <end position="102"/>
    </location>
</feature>
<feature type="helix" evidence="15">
    <location>
        <begin position="103"/>
        <end position="118"/>
    </location>
</feature>
<feature type="turn" evidence="15">
    <location>
        <begin position="119"/>
        <end position="121"/>
    </location>
</feature>
<feature type="strand" evidence="15">
    <location>
        <begin position="126"/>
        <end position="130"/>
    </location>
</feature>
<feature type="helix" evidence="15">
    <location>
        <begin position="134"/>
        <end position="142"/>
    </location>
</feature>
<feature type="strand" evidence="16">
    <location>
        <begin position="149"/>
        <end position="151"/>
    </location>
</feature>
<feature type="strand" evidence="15">
    <location>
        <begin position="154"/>
        <end position="158"/>
    </location>
</feature>
<proteinExistence type="evidence at protein level"/>
<organism>
    <name type="scientific">Salmonella typhimurium (strain 14028s / SGSC 2262)</name>
    <dbReference type="NCBI Taxonomy" id="588858"/>
    <lineage>
        <taxon>Bacteria</taxon>
        <taxon>Pseudomonadati</taxon>
        <taxon>Pseudomonadota</taxon>
        <taxon>Gammaproteobacteria</taxon>
        <taxon>Enterobacterales</taxon>
        <taxon>Enterobacteriaceae</taxon>
        <taxon>Salmonella</taxon>
    </lineage>
</organism>
<dbReference type="EC" id="2.3.1.-" evidence="3"/>
<dbReference type="EMBL" id="CP001363">
    <property type="protein sequence ID" value="ACY90786.1"/>
    <property type="molecule type" value="Genomic_DNA"/>
</dbReference>
<dbReference type="RefSeq" id="WP_000533909.1">
    <property type="nucleotide sequence ID" value="NZ_CP043402.1"/>
</dbReference>
<dbReference type="PDB" id="5FVJ">
    <property type="method" value="X-ray"/>
    <property type="resolution" value="1.70 A"/>
    <property type="chains" value="A/B=1-161"/>
</dbReference>
<dbReference type="PDB" id="7AK8">
    <property type="method" value="X-ray"/>
    <property type="resolution" value="2.50 A"/>
    <property type="chains" value="A/B/C/D/E/F=2-161"/>
</dbReference>
<dbReference type="PDBsum" id="5FVJ"/>
<dbReference type="PDBsum" id="7AK8"/>
<dbReference type="SMR" id="A0A0F6B8D8"/>
<dbReference type="KEGG" id="seo:STM14_4401"/>
<dbReference type="PATRIC" id="fig|588858.6.peg.4016"/>
<dbReference type="HOGENOM" id="CLU_101288_0_0_6"/>
<dbReference type="BioCyc" id="SENT588858:STM14_RS19325-MONOMER"/>
<dbReference type="Proteomes" id="UP000002695">
    <property type="component" value="Chromosome"/>
</dbReference>
<dbReference type="GO" id="GO:0016747">
    <property type="term" value="F:acyltransferase activity, transferring groups other than amino-acyl groups"/>
    <property type="evidence" value="ECO:0007669"/>
    <property type="project" value="InterPro"/>
</dbReference>
<dbReference type="GO" id="GO:0000049">
    <property type="term" value="F:tRNA binding"/>
    <property type="evidence" value="ECO:0007669"/>
    <property type="project" value="UniProtKB-KW"/>
</dbReference>
<dbReference type="Gene3D" id="3.40.630.30">
    <property type="match status" value="1"/>
</dbReference>
<dbReference type="InterPro" id="IPR016181">
    <property type="entry name" value="Acyl_CoA_acyltransferase"/>
</dbReference>
<dbReference type="InterPro" id="IPR000182">
    <property type="entry name" value="GNAT_dom"/>
</dbReference>
<dbReference type="PANTHER" id="PTHR36449:SF1">
    <property type="entry name" value="ACETYLTRANSFERASE"/>
    <property type="match status" value="1"/>
</dbReference>
<dbReference type="PANTHER" id="PTHR36449">
    <property type="entry name" value="ACETYLTRANSFERASE-RELATED"/>
    <property type="match status" value="1"/>
</dbReference>
<dbReference type="Pfam" id="PF13508">
    <property type="entry name" value="Acetyltransf_7"/>
    <property type="match status" value="1"/>
</dbReference>
<dbReference type="SUPFAM" id="SSF55729">
    <property type="entry name" value="Acyl-CoA N-acyltransferases (Nat)"/>
    <property type="match status" value="1"/>
</dbReference>
<protein>
    <recommendedName>
        <fullName evidence="10">tRNA-acetylating toxin 1</fullName>
        <shortName evidence="10">TacT1</shortName>
        <ecNumber evidence="3">2.3.1.-</ecNumber>
    </recommendedName>
    <alternativeName>
        <fullName evidence="8 9">Toxin T8</fullName>
    </alternativeName>
    <alternativeName>
        <fullName evidence="9">tRNA-acetylating toxin</fullName>
        <shortName evidence="9">TacT</shortName>
    </alternativeName>
</protein>
<sequence length="161" mass="17735">MGRVTAPEPLSAFHQVAEFVSGEAVLDDWLKQKGLKNQALGAARTFVVCKKDTKQVAGFYSLATGSVNHTEATGNLRRNMPDPIPVIILARLAVDLSFHGKGLGADLLHDAVLRCYRVAENIGVRAIMVHALTEEAKNFYIHHGFKSSQTQQRTLFLRLPQ</sequence>
<comment type="function">
    <text evidence="1 2 3 4 5 6">Toxic component of a type II toxin-antitoxin (TA) system (PubMed:29777131, PubMed:27264868, PubMed:34556858). Acetylates tRNA and inhibits translation, does not acetylate uncharged tRNA (PubMed:27264868, PubMed:29777131). Upon expression in situ acetylates only Gly-tRNA(Gly) (PubMed:35609997). In vitro acetylates mainly Gly and Ile/Leu (PubMed:29777131). Upon induction of the toxin gene in lag phase in rich medium (but not mid-exponential phase) the lag phase is extended by several hours, locking bacteria in a non-growth state (PubMed:27264868, PubMed:29777131). Neutralized only by cognate antitoxin TacA1 (A8), but not by TacA2 or TacA3 (PubMed:27264868, PubMed:34556858). Its toxic effect is neutralized by expression of peptidyl-tRNA hydrolase (pth) in lag phase (PubMed:27264868). NAD-dependent protein deacylase (cobB) also play a role in detoxifying TacT targets (PubMed:27264868). Expression increases persister cell formation, which is also abolished by either cognate antitoxin or Pth expression (PubMed:27264868). Plays a role in persister cell formation (PubMed:24408438).</text>
</comment>
<comment type="function">
    <text evidence="7">The TacA1-TacT1 complex binds (and probably represses) its own promoter DNA but not that of tacA3-tacT3, it does not repress the tacA3-tacT3 promoter (PubMed:38538913).</text>
</comment>
<comment type="catalytic activity">
    <reaction evidence="4">
        <text>glycyl-tRNA(Gly) + acetyl-CoA = N-acetylglycyl-tRNA(Gly) + CoA + H(+)</text>
        <dbReference type="Rhea" id="RHEA:81867"/>
        <dbReference type="Rhea" id="RHEA-COMP:9683"/>
        <dbReference type="Rhea" id="RHEA-COMP:19766"/>
        <dbReference type="ChEBI" id="CHEBI:15378"/>
        <dbReference type="ChEBI" id="CHEBI:57287"/>
        <dbReference type="ChEBI" id="CHEBI:57288"/>
        <dbReference type="ChEBI" id="CHEBI:78522"/>
        <dbReference type="ChEBI" id="CHEBI:232036"/>
    </reaction>
</comment>
<comment type="subunit">
    <text evidence="3 5">Homodimer (in absence of antitoxin) (PubMed:27264868). Forms a complex with cognate antitoxin TacA1 (PubMed:27264868). Forms a 4:2 antitoxin:toxin complex with cognate antitoxin TacA1 (PubMed:34556858).</text>
</comment>
<comment type="induction">
    <text evidence="2">The tacA1-tacT1 operon is up-regulated 5-fold in a relA-spoT-dependent manner within 30 minutes of phagocytosis by mouse bone marrow-derived macrophages.</text>
</comment>
<comment type="disruption phenotype">
    <text evidence="2 3 4">Deleting the operon causes 80% reduction in persister cell formation in mouse bone marrow-derived macrophages (PubMed:24408438). All 3 tacA-tacT operons can be deleted without an effect on growth in cell culture (PubMed:27264868, PubMed:29777131).</text>
</comment>
<comment type="similarity">
    <text evidence="11">Belongs to the acetyltransferase family. GNAT subfamily.</text>
</comment>
<evidence type="ECO:0000250" key="1">
    <source>
        <dbReference type="UniProtKB" id="Q8ZL98"/>
    </source>
</evidence>
<evidence type="ECO:0000269" key="2">
    <source>
    </source>
</evidence>
<evidence type="ECO:0000269" key="3">
    <source>
    </source>
</evidence>
<evidence type="ECO:0000269" key="4">
    <source>
    </source>
</evidence>
<evidence type="ECO:0000269" key="5">
    <source>
    </source>
</evidence>
<evidence type="ECO:0000269" key="6">
    <source>
    </source>
</evidence>
<evidence type="ECO:0000269" key="7">
    <source>
    </source>
</evidence>
<evidence type="ECO:0000303" key="8">
    <source>
    </source>
</evidence>
<evidence type="ECO:0000303" key="9">
    <source>
    </source>
</evidence>
<evidence type="ECO:0000303" key="10">
    <source>
    </source>
</evidence>
<evidence type="ECO:0000305" key="11">
    <source>
    </source>
</evidence>
<evidence type="ECO:0000312" key="12">
    <source>
        <dbReference type="EMBL" id="ACY90786.1"/>
    </source>
</evidence>
<evidence type="ECO:0007744" key="13">
    <source>
        <dbReference type="PDB" id="5FVJ"/>
    </source>
</evidence>
<evidence type="ECO:0007744" key="14">
    <source>
        <dbReference type="PDB" id="7AK8"/>
    </source>
</evidence>
<evidence type="ECO:0007829" key="15">
    <source>
        <dbReference type="PDB" id="5FVJ"/>
    </source>
</evidence>
<evidence type="ECO:0007829" key="16">
    <source>
        <dbReference type="PDB" id="7AK8"/>
    </source>
</evidence>
<name>TACT1_SALT1</name>
<keyword id="KW-0002">3D-structure</keyword>
<keyword id="KW-0012">Acyltransferase</keyword>
<keyword id="KW-0678">Repressor</keyword>
<keyword id="KW-0694">RNA-binding</keyword>
<keyword id="KW-1277">Toxin-antitoxin system</keyword>
<keyword id="KW-0804">Transcription</keyword>
<keyword id="KW-0805">Transcription regulation</keyword>
<keyword id="KW-0808">Transferase</keyword>
<keyword id="KW-0820">tRNA-binding</keyword>
<accession>A0A0F6B8D8</accession>
<reference evidence="12" key="1">
    <citation type="journal article" date="2010" name="J. Bacteriol.">
        <title>Short-term signatures of evolutionary change in the Salmonella enterica serovar typhimurium 14028 genome.</title>
        <authorList>
            <person name="Jarvik T."/>
            <person name="Smillie C."/>
            <person name="Groisman E.A."/>
            <person name="Ochman H."/>
        </authorList>
    </citation>
    <scope>NUCLEOTIDE SEQUENCE [LARGE SCALE GENOMIC DNA]</scope>
    <source>
        <strain>14028s / SGSC 2262</strain>
    </source>
</reference>
<reference key="2">
    <citation type="journal article" date="2014" name="Science">
        <title>Internalization of Salmonella by macrophages induces formation of nonreplicating persisters.</title>
        <authorList>
            <person name="Helaine S."/>
            <person name="Cheverton A.M."/>
            <person name="Watson K.G."/>
            <person name="Faure L.M."/>
            <person name="Matthews S.A."/>
            <person name="Holden D.W."/>
        </authorList>
    </citation>
    <scope>OPERON FUNCTION IN PERSISTER CELL FORMATION</scope>
    <scope>INDUCTION IN HOST MACROPHAGES</scope>
    <scope>DISRUPTION PHENOTYPE</scope>
    <source>
        <strain>14028s / SGSC 2262</strain>
    </source>
</reference>
<reference key="3">
    <citation type="journal article" date="2018" name="Nat. Commun.">
        <title>Activity of acetyltransferase toxins involved in Salmonella persister formation during macrophage infection.</title>
        <authorList>
            <person name="Rycroft J.A."/>
            <person name="Gollan B."/>
            <person name="Grabe G.J."/>
            <person name="Hall A."/>
            <person name="Cheverton A.M."/>
            <person name="Larrouy-Maumus G."/>
            <person name="Hare S.A."/>
            <person name="Helaine S."/>
        </authorList>
    </citation>
    <scope>FUNCTION AS A TOXIN</scope>
    <scope>CATALYTIC ACTIVITY</scope>
    <scope>MUTAGENESIS OF LYS-31</scope>
    <source>
        <strain>ATCC 14028 / SGSC 2980 / CDC 6516-60 / NCTC 12023</strain>
    </source>
</reference>
<reference key="4">
    <citation type="journal article" date="2022" name="Nucleic Acids Res.">
        <title>GNAT toxins evolve toward narrow tRNA target specificities.</title>
        <authorList>
            <person name="Bikmetov D."/>
            <person name="Hall A.M.J."/>
            <person name="Livenskyi A."/>
            <person name="Gollan B."/>
            <person name="Ovchinnikov S."/>
            <person name="Gilep K."/>
            <person name="Kim J.Y."/>
            <person name="Larrouy-Maumus G."/>
            <person name="Zgoda V."/>
            <person name="Borukhov S."/>
            <person name="Severinov K."/>
            <person name="Helaine S."/>
            <person name="Dubiley S."/>
        </authorList>
    </citation>
    <scope>FUNCTION</scope>
    <scope>CATALYTIC ACTIVITY</scope>
    <scope>SUBSTRATE SPECIFICITY</scope>
    <source>
        <strain>ATCC 14028 / SGSC 2980 / CDC 6516-60 / NCTC 12023</strain>
    </source>
</reference>
<reference key="5">
    <citation type="journal article" date="2024" name="Nat. Struct. Mol. Biol.">
        <title>Molecular stripping underpins derepression of a toxin-antitoxin system.</title>
        <authorList>
            <person name="Grabe G.J."/>
            <person name="Giorgio R.T."/>
            <person name="Wieczor M."/>
            <person name="Gollan B."/>
            <person name="Sargen M."/>
            <person name="Orozco M."/>
            <person name="Hare S.A."/>
            <person name="Helaine S."/>
        </authorList>
    </citation>
    <scope>FUNCTION</scope>
</reference>
<reference evidence="13" key="6">
    <citation type="journal article" date="2016" name="Mol. Cell">
        <title>A Salmonella Toxin Promotes Persister Formation through Acetylation of tRNA.</title>
        <authorList>
            <person name="Cheverton A.M."/>
            <person name="Gollan B."/>
            <person name="Przydacz M."/>
            <person name="Wong C.T."/>
            <person name="Mylona A."/>
            <person name="Hare S.A."/>
            <person name="Helaine S."/>
        </authorList>
    </citation>
    <scope>X-RAY CRYSTALLOGRAPHY (1.70 ANGSTROMS) IN COMPLEX WITH ACETYL-COA</scope>
    <scope>FUNCTION AS A TOXIN</scope>
    <scope>FUNCTION AS AN ACETYLASE</scope>
    <scope>POSSIBLE ACTIVE SITE</scope>
    <scope>SUBUNIT</scope>
    <scope>INTERACTION WITH TACA1</scope>
    <scope>DISRUPTION PHENOTYPE</scope>
    <scope>MUTAGENESIS OF LYS-33; LYS-36; ARG-77; ARG-78; ARG-91; ALA-93; TYR-140; LYS-146 AND ARG-158</scope>
    <source>
        <strain>ATCC 14028 / SGSC 2980 / CDC 6516-60 / NCTC 12023</strain>
    </source>
</reference>
<reference evidence="14" key="7">
    <citation type="journal article" date="2021" name="Nat. Chem. Biol.">
        <title>Auxiliary interfaces support the evolution of specific toxin-antitoxin pairing.</title>
        <authorList>
            <person name="Grabe G.J."/>
            <person name="Giorgio R.T."/>
            <person name="Hall A.M.J."/>
            <person name="Morgan R.M.L."/>
            <person name="Dubois L."/>
            <person name="Sisley T.A."/>
            <person name="Rycroft J.A."/>
            <person name="Hare S.A."/>
            <person name="Helaine S."/>
        </authorList>
    </citation>
    <scope>X-RAY CRYSTALLOGRAPHY (2.50 ANGSTROMS) OF 2-161 IN COMPLEX WITH ANTITOXIN DOMAIN AND ACETYL-COA</scope>
    <scope>FUNCTION AS A TOXIN</scope>
    <scope>SUBUNIT</scope>
    <source>
        <strain>14028s / SGSC 2262</strain>
    </source>
</reference>
<gene>
    <name evidence="9 10" type="primary">tacT1</name>
    <name evidence="8 9" type="synonym">t8</name>
    <name evidence="12" type="ordered locus">STM14_4401</name>
</gene>